<feature type="chain" id="PRO_0000433298" description="Storkhead-box protein 1" evidence="4">
    <location>
        <begin position="1"/>
        <end position="990"/>
    </location>
</feature>
<feature type="region of interest" description="Disordered" evidence="2">
    <location>
        <begin position="396"/>
        <end position="471"/>
    </location>
</feature>
<feature type="region of interest" description="Disordered" evidence="2">
    <location>
        <begin position="562"/>
        <end position="586"/>
    </location>
</feature>
<feature type="region of interest" description="Disordered" evidence="2">
    <location>
        <begin position="712"/>
        <end position="736"/>
    </location>
</feature>
<feature type="region of interest" description="Disordered" evidence="2">
    <location>
        <begin position="809"/>
        <end position="832"/>
    </location>
</feature>
<feature type="compositionally biased region" description="Basic and acidic residues" evidence="2">
    <location>
        <begin position="396"/>
        <end position="408"/>
    </location>
</feature>
<feature type="compositionally biased region" description="Basic residues" evidence="2">
    <location>
        <begin position="416"/>
        <end position="431"/>
    </location>
</feature>
<feature type="compositionally biased region" description="Polar residues" evidence="2">
    <location>
        <begin position="809"/>
        <end position="830"/>
    </location>
</feature>
<reference evidence="8" key="1">
    <citation type="journal article" date="2009" name="PLoS Biol.">
        <title>Lineage-specific biology revealed by a finished genome assembly of the mouse.</title>
        <authorList>
            <person name="Church D.M."/>
            <person name="Goodstadt L."/>
            <person name="Hillier L.W."/>
            <person name="Zody M.C."/>
            <person name="Goldstein S."/>
            <person name="She X."/>
            <person name="Bult C.J."/>
            <person name="Agarwala R."/>
            <person name="Cherry J.L."/>
            <person name="DiCuccio M."/>
            <person name="Hlavina W."/>
            <person name="Kapustin Y."/>
            <person name="Meric P."/>
            <person name="Maglott D."/>
            <person name="Birtle Z."/>
            <person name="Marques A.C."/>
            <person name="Graves T."/>
            <person name="Zhou S."/>
            <person name="Teague B."/>
            <person name="Potamousis K."/>
            <person name="Churas C."/>
            <person name="Place M."/>
            <person name="Herschleb J."/>
            <person name="Runnheim R."/>
            <person name="Forrest D."/>
            <person name="Amos-Landgraf J."/>
            <person name="Schwartz D.C."/>
            <person name="Cheng Z."/>
            <person name="Lindblad-Toh K."/>
            <person name="Eichler E.E."/>
            <person name="Ponting C.P."/>
        </authorList>
    </citation>
    <scope>NUCLEOTIDE SEQUENCE [LARGE SCALE GENOMIC DNA]</scope>
    <source>
        <strain evidence="8">C57BL/6J</strain>
    </source>
</reference>
<reference evidence="5" key="2">
    <citation type="journal article" date="2004" name="Genome Res.">
        <title>The status, quality, and expansion of the NIH full-length cDNA project: the Mammalian Gene Collection (MGC).</title>
        <authorList>
            <consortium name="The MGC Project Team"/>
        </authorList>
    </citation>
    <scope>NUCLEOTIDE SEQUENCE [LARGE SCALE MRNA]</scope>
</reference>
<reference evidence="6" key="3">
    <citation type="journal article" date="2005" name="Science">
        <title>The transcriptional landscape of the mammalian genome.</title>
        <authorList>
            <person name="Carninci P."/>
            <person name="Kasukawa T."/>
            <person name="Katayama S."/>
            <person name="Gough J."/>
            <person name="Frith M.C."/>
            <person name="Maeda N."/>
            <person name="Oyama R."/>
            <person name="Ravasi T."/>
            <person name="Lenhard B."/>
            <person name="Wells C."/>
            <person name="Kodzius R."/>
            <person name="Shimokawa K."/>
            <person name="Bajic V.B."/>
            <person name="Brenner S.E."/>
            <person name="Batalov S."/>
            <person name="Forrest A.R."/>
            <person name="Zavolan M."/>
            <person name="Davis M.J."/>
            <person name="Wilming L.G."/>
            <person name="Aidinis V."/>
            <person name="Allen J.E."/>
            <person name="Ambesi-Impiombato A."/>
            <person name="Apweiler R."/>
            <person name="Aturaliya R.N."/>
            <person name="Bailey T.L."/>
            <person name="Bansal M."/>
            <person name="Baxter L."/>
            <person name="Beisel K.W."/>
            <person name="Bersano T."/>
            <person name="Bono H."/>
            <person name="Chalk A.M."/>
            <person name="Chiu K.P."/>
            <person name="Choudhary V."/>
            <person name="Christoffels A."/>
            <person name="Clutterbuck D.R."/>
            <person name="Crowe M.L."/>
            <person name="Dalla E."/>
            <person name="Dalrymple B.P."/>
            <person name="de Bono B."/>
            <person name="Della Gatta G."/>
            <person name="di Bernardo D."/>
            <person name="Down T."/>
            <person name="Engstrom P."/>
            <person name="Fagiolini M."/>
            <person name="Faulkner G."/>
            <person name="Fletcher C.F."/>
            <person name="Fukushima T."/>
            <person name="Furuno M."/>
            <person name="Futaki S."/>
            <person name="Gariboldi M."/>
            <person name="Georgii-Hemming P."/>
            <person name="Gingeras T.R."/>
            <person name="Gojobori T."/>
            <person name="Green R.E."/>
            <person name="Gustincich S."/>
            <person name="Harbers M."/>
            <person name="Hayashi Y."/>
            <person name="Hensch T.K."/>
            <person name="Hirokawa N."/>
            <person name="Hill D."/>
            <person name="Huminiecki L."/>
            <person name="Iacono M."/>
            <person name="Ikeo K."/>
            <person name="Iwama A."/>
            <person name="Ishikawa T."/>
            <person name="Jakt M."/>
            <person name="Kanapin A."/>
            <person name="Katoh M."/>
            <person name="Kawasawa Y."/>
            <person name="Kelso J."/>
            <person name="Kitamura H."/>
            <person name="Kitano H."/>
            <person name="Kollias G."/>
            <person name="Krishnan S.P."/>
            <person name="Kruger A."/>
            <person name="Kummerfeld S.K."/>
            <person name="Kurochkin I.V."/>
            <person name="Lareau L.F."/>
            <person name="Lazarevic D."/>
            <person name="Lipovich L."/>
            <person name="Liu J."/>
            <person name="Liuni S."/>
            <person name="McWilliam S."/>
            <person name="Madan Babu M."/>
            <person name="Madera M."/>
            <person name="Marchionni L."/>
            <person name="Matsuda H."/>
            <person name="Matsuzawa S."/>
            <person name="Miki H."/>
            <person name="Mignone F."/>
            <person name="Miyake S."/>
            <person name="Morris K."/>
            <person name="Mottagui-Tabar S."/>
            <person name="Mulder N."/>
            <person name="Nakano N."/>
            <person name="Nakauchi H."/>
            <person name="Ng P."/>
            <person name="Nilsson R."/>
            <person name="Nishiguchi S."/>
            <person name="Nishikawa S."/>
            <person name="Nori F."/>
            <person name="Ohara O."/>
            <person name="Okazaki Y."/>
            <person name="Orlando V."/>
            <person name="Pang K.C."/>
            <person name="Pavan W.J."/>
            <person name="Pavesi G."/>
            <person name="Pesole G."/>
            <person name="Petrovsky N."/>
            <person name="Piazza S."/>
            <person name="Reed J."/>
            <person name="Reid J.F."/>
            <person name="Ring B.Z."/>
            <person name="Ringwald M."/>
            <person name="Rost B."/>
            <person name="Ruan Y."/>
            <person name="Salzberg S.L."/>
            <person name="Sandelin A."/>
            <person name="Schneider C."/>
            <person name="Schoenbach C."/>
            <person name="Sekiguchi K."/>
            <person name="Semple C.A."/>
            <person name="Seno S."/>
            <person name="Sessa L."/>
            <person name="Sheng Y."/>
            <person name="Shibata Y."/>
            <person name="Shimada H."/>
            <person name="Shimada K."/>
            <person name="Silva D."/>
            <person name="Sinclair B."/>
            <person name="Sperling S."/>
            <person name="Stupka E."/>
            <person name="Sugiura K."/>
            <person name="Sultana R."/>
            <person name="Takenaka Y."/>
            <person name="Taki K."/>
            <person name="Tammoja K."/>
            <person name="Tan S.L."/>
            <person name="Tang S."/>
            <person name="Taylor M.S."/>
            <person name="Tegner J."/>
            <person name="Teichmann S.A."/>
            <person name="Ueda H.R."/>
            <person name="van Nimwegen E."/>
            <person name="Verardo R."/>
            <person name="Wei C.L."/>
            <person name="Yagi K."/>
            <person name="Yamanishi H."/>
            <person name="Zabarovsky E."/>
            <person name="Zhu S."/>
            <person name="Zimmer A."/>
            <person name="Hide W."/>
            <person name="Bult C."/>
            <person name="Grimmond S.M."/>
            <person name="Teasdale R.D."/>
            <person name="Liu E.T."/>
            <person name="Brusic V."/>
            <person name="Quackenbush J."/>
            <person name="Wahlestedt C."/>
            <person name="Mattick J.S."/>
            <person name="Hume D.A."/>
            <person name="Kai C."/>
            <person name="Sasaki D."/>
            <person name="Tomaru Y."/>
            <person name="Fukuda S."/>
            <person name="Kanamori-Katayama M."/>
            <person name="Suzuki M."/>
            <person name="Aoki J."/>
            <person name="Arakawa T."/>
            <person name="Iida J."/>
            <person name="Imamura K."/>
            <person name="Itoh M."/>
            <person name="Kato T."/>
            <person name="Kawaji H."/>
            <person name="Kawagashira N."/>
            <person name="Kawashima T."/>
            <person name="Kojima M."/>
            <person name="Kondo S."/>
            <person name="Konno H."/>
            <person name="Nakano K."/>
            <person name="Ninomiya N."/>
            <person name="Nishio T."/>
            <person name="Okada M."/>
            <person name="Plessy C."/>
            <person name="Shibata K."/>
            <person name="Shiraki T."/>
            <person name="Suzuki S."/>
            <person name="Tagami M."/>
            <person name="Waki K."/>
            <person name="Watahiki A."/>
            <person name="Okamura-Oho Y."/>
            <person name="Suzuki H."/>
            <person name="Kawai J."/>
            <person name="Hayashizaki Y."/>
        </authorList>
    </citation>
    <scope>NUCLEOTIDE SEQUENCE [LARGE SCALE MRNA] OF 462-990</scope>
    <source>
        <strain evidence="6">C57BL/6J</strain>
        <tissue evidence="6">Pituitary</tissue>
    </source>
</reference>
<reference key="4">
    <citation type="journal article" date="2015" name="Cell Prolif.">
        <title>Transcription factor STOX1 regulates proliferation of inner ear epithelial cells via the AKT pathway.</title>
        <authorList>
            <person name="Nie X."/>
            <person name="Zhang K."/>
            <person name="Wang L."/>
            <person name="Ou G."/>
            <person name="Zhu H."/>
            <person name="Gao W.Q."/>
        </authorList>
    </citation>
    <scope>FUNCTION</scope>
    <scope>SUBCELLULAR LOCATION</scope>
    <scope>TISSUE SPECIFICITY</scope>
    <scope>DEVELOPMENTAL STAGE</scope>
</reference>
<organism evidence="8">
    <name type="scientific">Mus musculus</name>
    <name type="common">Mouse</name>
    <dbReference type="NCBI Taxonomy" id="10090"/>
    <lineage>
        <taxon>Eukaryota</taxon>
        <taxon>Metazoa</taxon>
        <taxon>Chordata</taxon>
        <taxon>Craniata</taxon>
        <taxon>Vertebrata</taxon>
        <taxon>Euteleostomi</taxon>
        <taxon>Mammalia</taxon>
        <taxon>Eutheria</taxon>
        <taxon>Euarchontoglires</taxon>
        <taxon>Glires</taxon>
        <taxon>Rodentia</taxon>
        <taxon>Myomorpha</taxon>
        <taxon>Muroidea</taxon>
        <taxon>Muridae</taxon>
        <taxon>Murinae</taxon>
        <taxon>Mus</taxon>
        <taxon>Mus</taxon>
    </lineage>
</organism>
<evidence type="ECO:0000250" key="1">
    <source>
        <dbReference type="UniProtKB" id="Q6ZVD7"/>
    </source>
</evidence>
<evidence type="ECO:0000256" key="2">
    <source>
        <dbReference type="SAM" id="MobiDB-lite"/>
    </source>
</evidence>
<evidence type="ECO:0000269" key="3">
    <source>
    </source>
</evidence>
<evidence type="ECO:0000305" key="4"/>
<evidence type="ECO:0000312" key="5">
    <source>
        <dbReference type="EMBL" id="AAI37979.1"/>
    </source>
</evidence>
<evidence type="ECO:0000312" key="6">
    <source>
        <dbReference type="EMBL" id="BAE21776.1"/>
    </source>
</evidence>
<evidence type="ECO:0000312" key="7">
    <source>
        <dbReference type="MGI" id="MGI:2684909"/>
    </source>
</evidence>
<evidence type="ECO:0000312" key="8">
    <source>
        <dbReference type="Proteomes" id="UP000000589"/>
    </source>
</evidence>
<dbReference type="EMBL" id="AC122539">
    <property type="status" value="NOT_ANNOTATED_CDS"/>
    <property type="molecule type" value="Genomic_DNA"/>
</dbReference>
<dbReference type="EMBL" id="BC137978">
    <property type="protein sequence ID" value="AAI37979.1"/>
    <property type="molecule type" value="mRNA"/>
</dbReference>
<dbReference type="EMBL" id="AK133671">
    <property type="protein sequence ID" value="BAE21776.1"/>
    <property type="status" value="ALT_INIT"/>
    <property type="molecule type" value="mRNA"/>
</dbReference>
<dbReference type="CCDS" id="CCDS48580.1"/>
<dbReference type="RefSeq" id="NP_001028432.1">
    <property type="nucleotide sequence ID" value="NM_001033260.2"/>
</dbReference>
<dbReference type="SMR" id="B2RQL2"/>
<dbReference type="FunCoup" id="B2RQL2">
    <property type="interactions" value="1303"/>
</dbReference>
<dbReference type="STRING" id="10090.ENSMUSP00000114652"/>
<dbReference type="GlyGen" id="B2RQL2">
    <property type="glycosylation" value="2 sites, 1 O-linked glycan (1 site)"/>
</dbReference>
<dbReference type="iPTMnet" id="B2RQL2"/>
<dbReference type="PhosphoSitePlus" id="B2RQL2"/>
<dbReference type="PaxDb" id="10090-ENSMUSP00000114652"/>
<dbReference type="ProteomicsDB" id="257460"/>
<dbReference type="Antibodypedia" id="51097">
    <property type="antibodies" value="66 antibodies from 20 providers"/>
</dbReference>
<dbReference type="Ensembl" id="ENSMUST00000133371.8">
    <property type="protein sequence ID" value="ENSMUSP00000114652.2"/>
    <property type="gene ID" value="ENSMUSG00000036923.13"/>
</dbReference>
<dbReference type="GeneID" id="216021"/>
<dbReference type="KEGG" id="mmu:216021"/>
<dbReference type="UCSC" id="uc011xfe.1">
    <property type="organism name" value="mouse"/>
</dbReference>
<dbReference type="AGR" id="MGI:2684909"/>
<dbReference type="CTD" id="219736"/>
<dbReference type="MGI" id="MGI:2684909">
    <property type="gene designation" value="Stox1"/>
</dbReference>
<dbReference type="VEuPathDB" id="HostDB:ENSMUSG00000036923"/>
<dbReference type="eggNOG" id="KOG3897">
    <property type="taxonomic scope" value="Eukaryota"/>
</dbReference>
<dbReference type="GeneTree" id="ENSGT00520000055589"/>
<dbReference type="HOGENOM" id="CLU_306723_0_0_1"/>
<dbReference type="InParanoid" id="B2RQL2"/>
<dbReference type="OMA" id="PHTYFIT"/>
<dbReference type="OrthoDB" id="10020110at2759"/>
<dbReference type="PhylomeDB" id="B2RQL2"/>
<dbReference type="TreeFam" id="TF337253"/>
<dbReference type="BioGRID-ORCS" id="216021">
    <property type="hits" value="3 hits in 76 CRISPR screens"/>
</dbReference>
<dbReference type="ChiTaRS" id="Stox1">
    <property type="organism name" value="mouse"/>
</dbReference>
<dbReference type="PRO" id="PR:B2RQL2"/>
<dbReference type="Proteomes" id="UP000000589">
    <property type="component" value="Chromosome 10"/>
</dbReference>
<dbReference type="RNAct" id="B2RQL2">
    <property type="molecule type" value="protein"/>
</dbReference>
<dbReference type="Bgee" id="ENSMUSG00000036923">
    <property type="expression patterns" value="Expressed in spermatocyte and 77 other cell types or tissues"/>
</dbReference>
<dbReference type="ExpressionAtlas" id="B2RQL2">
    <property type="expression patterns" value="baseline and differential"/>
</dbReference>
<dbReference type="GO" id="GO:0005938">
    <property type="term" value="C:cell cortex"/>
    <property type="evidence" value="ECO:0000314"/>
    <property type="project" value="UniProtKB"/>
</dbReference>
<dbReference type="GO" id="GO:0005813">
    <property type="term" value="C:centrosome"/>
    <property type="evidence" value="ECO:0007669"/>
    <property type="project" value="UniProtKB-SubCell"/>
</dbReference>
<dbReference type="GO" id="GO:0005829">
    <property type="term" value="C:cytosol"/>
    <property type="evidence" value="ECO:0007669"/>
    <property type="project" value="Ensembl"/>
</dbReference>
<dbReference type="GO" id="GO:0001650">
    <property type="term" value="C:fibrillar center"/>
    <property type="evidence" value="ECO:0007669"/>
    <property type="project" value="Ensembl"/>
</dbReference>
<dbReference type="GO" id="GO:0005654">
    <property type="term" value="C:nucleoplasm"/>
    <property type="evidence" value="ECO:0007669"/>
    <property type="project" value="Ensembl"/>
</dbReference>
<dbReference type="GO" id="GO:0005634">
    <property type="term" value="C:nucleus"/>
    <property type="evidence" value="ECO:0000314"/>
    <property type="project" value="UniProtKB"/>
</dbReference>
<dbReference type="GO" id="GO:0000977">
    <property type="term" value="F:RNA polymerase II transcription regulatory region sequence-specific DNA binding"/>
    <property type="evidence" value="ECO:0007669"/>
    <property type="project" value="Ensembl"/>
</dbReference>
<dbReference type="GO" id="GO:0051301">
    <property type="term" value="P:cell division"/>
    <property type="evidence" value="ECO:0007669"/>
    <property type="project" value="UniProtKB-KW"/>
</dbReference>
<dbReference type="GO" id="GO:0071500">
    <property type="term" value="P:cellular response to nitrosative stress"/>
    <property type="evidence" value="ECO:0007669"/>
    <property type="project" value="Ensembl"/>
</dbReference>
<dbReference type="GO" id="GO:0048839">
    <property type="term" value="P:inner ear development"/>
    <property type="evidence" value="ECO:0000314"/>
    <property type="project" value="UniProtKB"/>
</dbReference>
<dbReference type="GO" id="GO:0010629">
    <property type="term" value="P:negative regulation of gene expression"/>
    <property type="evidence" value="ECO:0007669"/>
    <property type="project" value="Ensembl"/>
</dbReference>
<dbReference type="GO" id="GO:0045787">
    <property type="term" value="P:positive regulation of cell cycle"/>
    <property type="evidence" value="ECO:0000315"/>
    <property type="project" value="UniProtKB"/>
</dbReference>
<dbReference type="GO" id="GO:1900087">
    <property type="term" value="P:positive regulation of G1/S transition of mitotic cell cycle"/>
    <property type="evidence" value="ECO:0007669"/>
    <property type="project" value="Ensembl"/>
</dbReference>
<dbReference type="GO" id="GO:0010971">
    <property type="term" value="P:positive regulation of G2/M transition of mitotic cell cycle"/>
    <property type="evidence" value="ECO:0007669"/>
    <property type="project" value="Ensembl"/>
</dbReference>
<dbReference type="GO" id="GO:0010628">
    <property type="term" value="P:positive regulation of gene expression"/>
    <property type="evidence" value="ECO:0007669"/>
    <property type="project" value="Ensembl"/>
</dbReference>
<dbReference type="GO" id="GO:1904120">
    <property type="term" value="P:positive regulation of otic vesicle morphogenesis"/>
    <property type="evidence" value="ECO:0000315"/>
    <property type="project" value="UniProtKB"/>
</dbReference>
<dbReference type="GO" id="GO:0051897">
    <property type="term" value="P:positive regulation of phosphatidylinositol 3-kinase/protein kinase B signal transduction"/>
    <property type="evidence" value="ECO:0000315"/>
    <property type="project" value="UniProtKB"/>
</dbReference>
<dbReference type="GO" id="GO:1901858">
    <property type="term" value="P:regulation of mitochondrial DNA metabolic process"/>
    <property type="evidence" value="ECO:0007669"/>
    <property type="project" value="Ensembl"/>
</dbReference>
<dbReference type="GO" id="GO:0051881">
    <property type="term" value="P:regulation of mitochondrial membrane potential"/>
    <property type="evidence" value="ECO:0007669"/>
    <property type="project" value="Ensembl"/>
</dbReference>
<dbReference type="GO" id="GO:0010821">
    <property type="term" value="P:regulation of mitochondrion organization"/>
    <property type="evidence" value="ECO:0007669"/>
    <property type="project" value="Ensembl"/>
</dbReference>
<dbReference type="GO" id="GO:0007346">
    <property type="term" value="P:regulation of mitotic cell cycle"/>
    <property type="evidence" value="ECO:0000315"/>
    <property type="project" value="UniProtKB"/>
</dbReference>
<dbReference type="GO" id="GO:1902882">
    <property type="term" value="P:regulation of response to oxidative stress"/>
    <property type="evidence" value="ECO:0007669"/>
    <property type="project" value="Ensembl"/>
</dbReference>
<dbReference type="GO" id="GO:0006357">
    <property type="term" value="P:regulation of transcription by RNA polymerase II"/>
    <property type="evidence" value="ECO:0007669"/>
    <property type="project" value="Ensembl"/>
</dbReference>
<dbReference type="InterPro" id="IPR019391">
    <property type="entry name" value="Storkhead-box_winged-helix"/>
</dbReference>
<dbReference type="InterPro" id="IPR040126">
    <property type="entry name" value="STOX1/2"/>
</dbReference>
<dbReference type="PANTHER" id="PTHR22437:SF1">
    <property type="entry name" value="STORKHEAD-BOX PROTEIN 1"/>
    <property type="match status" value="1"/>
</dbReference>
<dbReference type="PANTHER" id="PTHR22437">
    <property type="entry name" value="WINGED HELIX DOMAIN-CONTAINING PROTEIN"/>
    <property type="match status" value="1"/>
</dbReference>
<dbReference type="Pfam" id="PF10264">
    <property type="entry name" value="Stork_head"/>
    <property type="match status" value="1"/>
</dbReference>
<gene>
    <name evidence="7" type="primary">Stox1</name>
</gene>
<protein>
    <recommendedName>
        <fullName evidence="7">Storkhead-box protein 1</fullName>
    </recommendedName>
</protein>
<sequence>MARPVQLAPGSLALVLSPREAGQAAGEPGGRALFRAFRRANARCFWNARLARAASRLAFLGWLRRGVLLVRAPQPCVQVLRDAWRRRALRPPRGFRITAVGDVFPVQMSPIAQCRFVPLAEVLCCAIADMNAAQVMVTQQSLLEHLIKHYPGIAVPSPDILYSTLGALIQERKIYHTGEGYFIVTPSTYFITNTPMQGNKSALLSNEGCSGPTSGTYLVSVDCCAEPTQENEALFSHCPSCQCYPDTSMCDSKDLLTAAEVTRKSQEGLEETTALTENQVVSASEDTHICVNPKPLPYTKDKGKRFGFGFLWRSLSRKEKPKAEYHSFSAQFPPEEWPVRDEDSSTKIPRDVEHALIKRINPVLTVDNLTKHTALMQKYEEQKKYNSQGTSMDILTTRHKDSSKEVIGKRQGQFAKSRRRGSSHKGRHKARSQGSELEPGNPGQEKEKQPKVPAAQPAPRTKSPSEQVHHLQGRNPAVLGSHLIYKKQINNPFQGMHLRKHSVSKGHAVQKTHGLKPTCVGPEEKPFWSAGSSDPSGVFDGEAQPPYPEQCRDKLEAGSTQVAKAPVHPVSDDFRGGPGNYPPRRVLPGPSRCCSFRESMLRPGVYHEENKDLPEVLRKSWSTCDMFLGTKEKKQALPAQRCSLDPDSSSVHAEDKTVDKILHQFQNLGLLDCPAGANRLRTHERQDGNSEELSRKALQIPEAEIVNMENEGLSDSEQDQVALSHSDPGAGDDGGCSSLCLEDDDFSETDDFCPSLPGHTQHSFAGGGTWNHLGTPAMTGKSLTDCNSKAHRLELLAIERNPWYKATGLFSNAGESPNPDLSDNPGQNSRIPWGFNYEGEPTVAHVQTPAAAAGRSLLACSTVRTTSFPVEILQESPGDRGKSPIVWRQSLPSQEMKEHFTDKLQLVKTSHGPVSAQEPQGEHLEGTENYSMTGDSGIDSPRTQSLVSTNSAILDGFKRRQHFLPNREGVQKSQNLASNSLFQLTPAINV</sequence>
<proteinExistence type="evidence at protein level"/>
<keyword id="KW-0010">Activator</keyword>
<keyword id="KW-0131">Cell cycle</keyword>
<keyword id="KW-0132">Cell division</keyword>
<keyword id="KW-0963">Cytoplasm</keyword>
<keyword id="KW-0206">Cytoskeleton</keyword>
<keyword id="KW-0238">DNA-binding</keyword>
<keyword id="KW-0498">Mitosis</keyword>
<keyword id="KW-0539">Nucleus</keyword>
<keyword id="KW-1185">Reference proteome</keyword>
<keyword id="KW-0804">Transcription</keyword>
<keyword id="KW-0805">Transcription regulation</keyword>
<name>STOX1_MOUSE</name>
<accession>B2RQL2</accession>
<accession>Q3UZS9</accession>
<comment type="function">
    <text evidence="1 3">Involved in regulating the levels of reactive oxidative species and reactive nitrogen species and in mitochondrial homeostasis in the placenta (By similarity). Required for regulation of inner ear epithelial cell proliferation via the AKT signaling pathway (PubMed:25677106). Involved in cell cycle regulation by binding to the CCNB1 promoter, up-regulating its expression and promoting mitotic entry (By similarity). Induces phosphorylation of MAPT/tau (By similarity).</text>
</comment>
<comment type="subcellular location">
    <subcellularLocation>
        <location evidence="3">Nucleus</location>
    </subcellularLocation>
    <subcellularLocation>
        <location evidence="3">Cytoplasm</location>
    </subcellularLocation>
    <subcellularLocation>
        <location evidence="1">Cytoplasm</location>
        <location evidence="1">Cytoskeleton</location>
        <location evidence="1">Microtubule organizing center</location>
        <location evidence="1">Centrosome</location>
    </subcellularLocation>
    <text evidence="1 3">In epithelial cells, diffusely expressed in the cytoplasm, particularly in peri-membrane cortical regions (PubMed:25677106). Concentrated at centrosomes during metaphase (By similarity).</text>
</comment>
<comment type="tissue specificity">
    <text evidence="3">Detected in sensory epithelial cells of the inner ear but not in adjacent surrounding tissue (at protein level).</text>
</comment>
<comment type="developmental stage">
    <text evidence="3">Highly expressed at 14 dpc with lower levels at 18 dpc and P3.</text>
</comment>
<comment type="sequence caution" evidence="4">
    <conflict type="erroneous initiation">
        <sequence resource="EMBL-CDS" id="BAE21776"/>
    </conflict>
    <text>Truncated N-terminus.</text>
</comment>